<accession>Q2ST36</accession>
<organism>
    <name type="scientific">Mycoplasma capricolum subsp. capricolum (strain California kid / ATCC 27343 / NCTC 10154)</name>
    <dbReference type="NCBI Taxonomy" id="340047"/>
    <lineage>
        <taxon>Bacteria</taxon>
        <taxon>Bacillati</taxon>
        <taxon>Mycoplasmatota</taxon>
        <taxon>Mollicutes</taxon>
        <taxon>Mycoplasmataceae</taxon>
        <taxon>Mycoplasma</taxon>
    </lineage>
</organism>
<reference key="1">
    <citation type="submission" date="2005-09" db="EMBL/GenBank/DDBJ databases">
        <authorList>
            <person name="Glass J.I."/>
            <person name="Lartigue C."/>
            <person name="Pfannkoch C."/>
            <person name="Baden-Tillson H."/>
            <person name="Smith H.O."/>
            <person name="Venter J.C."/>
            <person name="Roske K."/>
            <person name="Wise K.S."/>
            <person name="Calcutt M.J."/>
            <person name="Nelson W.C."/>
            <person name="Nierman W.C."/>
        </authorList>
    </citation>
    <scope>NUCLEOTIDE SEQUENCE [LARGE SCALE GENOMIC DNA]</scope>
    <source>
        <strain>California kid / ATCC 27343 / NCTC 10154</strain>
    </source>
</reference>
<name>ATPA_MYCCT</name>
<evidence type="ECO:0000255" key="1">
    <source>
        <dbReference type="HAMAP-Rule" id="MF_01346"/>
    </source>
</evidence>
<keyword id="KW-0066">ATP synthesis</keyword>
<keyword id="KW-0067">ATP-binding</keyword>
<keyword id="KW-1003">Cell membrane</keyword>
<keyword id="KW-0139">CF(1)</keyword>
<keyword id="KW-0375">Hydrogen ion transport</keyword>
<keyword id="KW-0406">Ion transport</keyword>
<keyword id="KW-0472">Membrane</keyword>
<keyword id="KW-0547">Nucleotide-binding</keyword>
<keyword id="KW-1278">Translocase</keyword>
<keyword id="KW-0813">Transport</keyword>
<comment type="function">
    <text evidence="1">Produces ATP from ADP in the presence of a proton gradient across the membrane. The alpha chain is a regulatory subunit.</text>
</comment>
<comment type="catalytic activity">
    <reaction evidence="1">
        <text>ATP + H2O + 4 H(+)(in) = ADP + phosphate + 5 H(+)(out)</text>
        <dbReference type="Rhea" id="RHEA:57720"/>
        <dbReference type="ChEBI" id="CHEBI:15377"/>
        <dbReference type="ChEBI" id="CHEBI:15378"/>
        <dbReference type="ChEBI" id="CHEBI:30616"/>
        <dbReference type="ChEBI" id="CHEBI:43474"/>
        <dbReference type="ChEBI" id="CHEBI:456216"/>
        <dbReference type="EC" id="7.1.2.2"/>
    </reaction>
</comment>
<comment type="subunit">
    <text evidence="1">F-type ATPases have 2 components, CF(1) - the catalytic core - and CF(0) - the membrane proton channel. CF(1) has five subunits: alpha(3), beta(3), gamma(1), delta(1), epsilon(1). CF(0) has three main subunits: a(1), b(2) and c(9-12). The alpha and beta chains form an alternating ring which encloses part of the gamma chain. CF(1) is attached to CF(0) by a central stalk formed by the gamma and epsilon chains, while a peripheral stalk is formed by the delta and b chains.</text>
</comment>
<comment type="subcellular location">
    <subcellularLocation>
        <location evidence="1">Cell membrane</location>
        <topology evidence="1">Peripheral membrane protein</topology>
    </subcellularLocation>
</comment>
<comment type="similarity">
    <text evidence="1">Belongs to the ATPase alpha/beta chains family.</text>
</comment>
<proteinExistence type="inferred from homology"/>
<sequence length="525" mass="58067">MSFNIKEISEMIEKQIRNYNKEVVQTEQGTVVSVGDGIALIYGLDNAIMGELLLFSNNVYGMVLNLEEGAVGSVILGDETLIREGDIVKRTNKVVETPVGDALLGRVIDALGQPIDNLGPIDFTKTRPVERVATSVMARKSVSQPLETGILAIDSAIPIGKGQRELIIGDRQTGKTAIAIDAIINQKNRNVKCIYVAIGQKDSTIVQVVEKFKKYGAMDYTVVVNAGASQPASLQYLSPYTGITIAEEWMESGNDVLIVYDDLTKHAVSYREMSLLLRRPPGREAYPGDVFYLHSRLLERAARVNENYGGGSITALPIIETQAGDISAYIPTNVISITDGQIFLSSELFNQGVRPAVDIGPSVSRVGSAAQIKSIKQVSGTLKLELAQYYELESFAKFGSDLDETTKATLDQGAKIIQMLIQKQFNPLEQVDQAILLLTIKSHLLKWLPLDSIYNFKHEILSHFKNDQQAAKLRKKLDEQKTFDDQLQKEILKQAQKVVLKITKNIKEYKPEAFGNITEYQNLGK</sequence>
<gene>
    <name evidence="1" type="primary">atpA</name>
    <name type="ordered locus">MCAP_0082</name>
</gene>
<feature type="chain" id="PRO_0000238290" description="ATP synthase subunit alpha">
    <location>
        <begin position="1"/>
        <end position="525"/>
    </location>
</feature>
<feature type="binding site" evidence="1">
    <location>
        <begin position="169"/>
        <end position="176"/>
    </location>
    <ligand>
        <name>ATP</name>
        <dbReference type="ChEBI" id="CHEBI:30616"/>
    </ligand>
</feature>
<feature type="site" description="Required for activity" evidence="1">
    <location>
        <position position="362"/>
    </location>
</feature>
<dbReference type="EC" id="7.1.2.2" evidence="1"/>
<dbReference type="EMBL" id="CP000123">
    <property type="protein sequence ID" value="ABC01292.1"/>
    <property type="molecule type" value="Genomic_DNA"/>
</dbReference>
<dbReference type="RefSeq" id="WP_011386982.1">
    <property type="nucleotide sequence ID" value="NC_007633.1"/>
</dbReference>
<dbReference type="SMR" id="Q2ST36"/>
<dbReference type="GeneID" id="23778963"/>
<dbReference type="KEGG" id="mcp:MCAP_0082"/>
<dbReference type="HOGENOM" id="CLU_010091_2_1_14"/>
<dbReference type="PhylomeDB" id="Q2ST36"/>
<dbReference type="Proteomes" id="UP000001928">
    <property type="component" value="Chromosome"/>
</dbReference>
<dbReference type="GO" id="GO:0005886">
    <property type="term" value="C:plasma membrane"/>
    <property type="evidence" value="ECO:0007669"/>
    <property type="project" value="UniProtKB-SubCell"/>
</dbReference>
<dbReference type="GO" id="GO:0045259">
    <property type="term" value="C:proton-transporting ATP synthase complex"/>
    <property type="evidence" value="ECO:0007669"/>
    <property type="project" value="UniProtKB-KW"/>
</dbReference>
<dbReference type="GO" id="GO:0043531">
    <property type="term" value="F:ADP binding"/>
    <property type="evidence" value="ECO:0007669"/>
    <property type="project" value="TreeGrafter"/>
</dbReference>
<dbReference type="GO" id="GO:0005524">
    <property type="term" value="F:ATP binding"/>
    <property type="evidence" value="ECO:0007669"/>
    <property type="project" value="UniProtKB-UniRule"/>
</dbReference>
<dbReference type="GO" id="GO:0046933">
    <property type="term" value="F:proton-transporting ATP synthase activity, rotational mechanism"/>
    <property type="evidence" value="ECO:0007669"/>
    <property type="project" value="UniProtKB-UniRule"/>
</dbReference>
<dbReference type="CDD" id="cd18113">
    <property type="entry name" value="ATP-synt_F1_alpha_C"/>
    <property type="match status" value="1"/>
</dbReference>
<dbReference type="CDD" id="cd18116">
    <property type="entry name" value="ATP-synt_F1_alpha_N"/>
    <property type="match status" value="1"/>
</dbReference>
<dbReference type="CDD" id="cd01132">
    <property type="entry name" value="F1-ATPase_alpha_CD"/>
    <property type="match status" value="1"/>
</dbReference>
<dbReference type="FunFam" id="3.40.50.300:FF:000002">
    <property type="entry name" value="ATP synthase subunit alpha"/>
    <property type="match status" value="1"/>
</dbReference>
<dbReference type="Gene3D" id="2.40.30.20">
    <property type="match status" value="1"/>
</dbReference>
<dbReference type="Gene3D" id="1.20.150.20">
    <property type="entry name" value="ATP synthase alpha/beta chain, C-terminal domain"/>
    <property type="match status" value="1"/>
</dbReference>
<dbReference type="Gene3D" id="3.40.50.300">
    <property type="entry name" value="P-loop containing nucleotide triphosphate hydrolases"/>
    <property type="match status" value="1"/>
</dbReference>
<dbReference type="HAMAP" id="MF_01346">
    <property type="entry name" value="ATP_synth_alpha_bact"/>
    <property type="match status" value="1"/>
</dbReference>
<dbReference type="InterPro" id="IPR023366">
    <property type="entry name" value="ATP_synth_asu-like_sf"/>
</dbReference>
<dbReference type="InterPro" id="IPR000793">
    <property type="entry name" value="ATP_synth_asu_C"/>
</dbReference>
<dbReference type="InterPro" id="IPR038376">
    <property type="entry name" value="ATP_synth_asu_C_sf"/>
</dbReference>
<dbReference type="InterPro" id="IPR033732">
    <property type="entry name" value="ATP_synth_F1_a_nt-bd_dom"/>
</dbReference>
<dbReference type="InterPro" id="IPR005294">
    <property type="entry name" value="ATP_synth_F1_asu"/>
</dbReference>
<dbReference type="InterPro" id="IPR020003">
    <property type="entry name" value="ATPase_a/bsu_AS"/>
</dbReference>
<dbReference type="InterPro" id="IPR004100">
    <property type="entry name" value="ATPase_F1/V1/A1_a/bsu_N"/>
</dbReference>
<dbReference type="InterPro" id="IPR036121">
    <property type="entry name" value="ATPase_F1/V1/A1_a/bsu_N_sf"/>
</dbReference>
<dbReference type="InterPro" id="IPR000194">
    <property type="entry name" value="ATPase_F1/V1/A1_a/bsu_nucl-bd"/>
</dbReference>
<dbReference type="InterPro" id="IPR027417">
    <property type="entry name" value="P-loop_NTPase"/>
</dbReference>
<dbReference type="NCBIfam" id="TIGR00962">
    <property type="entry name" value="atpA"/>
    <property type="match status" value="1"/>
</dbReference>
<dbReference type="NCBIfam" id="NF009884">
    <property type="entry name" value="PRK13343.1"/>
    <property type="match status" value="1"/>
</dbReference>
<dbReference type="PANTHER" id="PTHR48082">
    <property type="entry name" value="ATP SYNTHASE SUBUNIT ALPHA, MITOCHONDRIAL"/>
    <property type="match status" value="1"/>
</dbReference>
<dbReference type="PANTHER" id="PTHR48082:SF2">
    <property type="entry name" value="ATP SYNTHASE SUBUNIT ALPHA, MITOCHONDRIAL"/>
    <property type="match status" value="1"/>
</dbReference>
<dbReference type="Pfam" id="PF00006">
    <property type="entry name" value="ATP-synt_ab"/>
    <property type="match status" value="1"/>
</dbReference>
<dbReference type="Pfam" id="PF00306">
    <property type="entry name" value="ATP-synt_ab_C"/>
    <property type="match status" value="1"/>
</dbReference>
<dbReference type="Pfam" id="PF02874">
    <property type="entry name" value="ATP-synt_ab_N"/>
    <property type="match status" value="1"/>
</dbReference>
<dbReference type="SUPFAM" id="SSF47917">
    <property type="entry name" value="C-terminal domain of alpha and beta subunits of F1 ATP synthase"/>
    <property type="match status" value="1"/>
</dbReference>
<dbReference type="SUPFAM" id="SSF50615">
    <property type="entry name" value="N-terminal domain of alpha and beta subunits of F1 ATP synthase"/>
    <property type="match status" value="1"/>
</dbReference>
<dbReference type="SUPFAM" id="SSF52540">
    <property type="entry name" value="P-loop containing nucleoside triphosphate hydrolases"/>
    <property type="match status" value="1"/>
</dbReference>
<dbReference type="PROSITE" id="PS00152">
    <property type="entry name" value="ATPASE_ALPHA_BETA"/>
    <property type="match status" value="1"/>
</dbReference>
<protein>
    <recommendedName>
        <fullName evidence="1">ATP synthase subunit alpha</fullName>
        <ecNumber evidence="1">7.1.2.2</ecNumber>
    </recommendedName>
    <alternativeName>
        <fullName evidence="1">ATP synthase F1 sector subunit alpha</fullName>
    </alternativeName>
    <alternativeName>
        <fullName evidence="1">F-ATPase subunit alpha</fullName>
    </alternativeName>
</protein>